<gene>
    <name evidence="1" type="primary">leuD</name>
    <name type="ordered locus">TERTU_2501</name>
</gene>
<keyword id="KW-0028">Amino-acid biosynthesis</keyword>
<keyword id="KW-0100">Branched-chain amino acid biosynthesis</keyword>
<keyword id="KW-0432">Leucine biosynthesis</keyword>
<keyword id="KW-0456">Lyase</keyword>
<keyword id="KW-1185">Reference proteome</keyword>
<accession>C5BL65</accession>
<sequence length="215" mass="24259">MRAFTTHTGLVAPMDRANVDTDLIIPKQFLKSIKRTGFGPNAFDELRYLDKGEPGQDNSSRPLNPEFPLNHARYQGASVLLARKNFGCGSSREHAPWALEEFGFRAIIAPSFADIFYNNCFKNGLLPIVLDEAVVDSLFAAMYSEEGFQIEIDLQAQTVTSAGQTYTFDVDEFRKHCLLNGFDDISLTLLDAEKIQTYEAQRRQSQPWLFNAVHQ</sequence>
<reference key="1">
    <citation type="journal article" date="2009" name="PLoS ONE">
        <title>The complete genome of Teredinibacter turnerae T7901: an intracellular endosymbiont of marine wood-boring bivalves (shipworms).</title>
        <authorList>
            <person name="Yang J.C."/>
            <person name="Madupu R."/>
            <person name="Durkin A.S."/>
            <person name="Ekborg N.A."/>
            <person name="Pedamallu C.S."/>
            <person name="Hostetler J.B."/>
            <person name="Radune D."/>
            <person name="Toms B.S."/>
            <person name="Henrissat B."/>
            <person name="Coutinho P.M."/>
            <person name="Schwarz S."/>
            <person name="Field L."/>
            <person name="Trindade-Silva A.E."/>
            <person name="Soares C.A.G."/>
            <person name="Elshahawi S."/>
            <person name="Hanora A."/>
            <person name="Schmidt E.W."/>
            <person name="Haygood M.G."/>
            <person name="Posfai J."/>
            <person name="Benner J."/>
            <person name="Madinger C."/>
            <person name="Nove J."/>
            <person name="Anton B."/>
            <person name="Chaudhary K."/>
            <person name="Foster J."/>
            <person name="Holman A."/>
            <person name="Kumar S."/>
            <person name="Lessard P.A."/>
            <person name="Luyten Y.A."/>
            <person name="Slatko B."/>
            <person name="Wood N."/>
            <person name="Wu B."/>
            <person name="Teplitski M."/>
            <person name="Mougous J.D."/>
            <person name="Ward N."/>
            <person name="Eisen J.A."/>
            <person name="Badger J.H."/>
            <person name="Distel D.L."/>
        </authorList>
    </citation>
    <scope>NUCLEOTIDE SEQUENCE [LARGE SCALE GENOMIC DNA]</scope>
    <source>
        <strain>ATCC 39867 / T7901</strain>
    </source>
</reference>
<protein>
    <recommendedName>
        <fullName evidence="1">3-isopropylmalate dehydratase small subunit</fullName>
        <ecNumber evidence="1">4.2.1.33</ecNumber>
    </recommendedName>
    <alternativeName>
        <fullName evidence="1">Alpha-IPM isomerase</fullName>
        <shortName evidence="1">IPMI</shortName>
    </alternativeName>
    <alternativeName>
        <fullName evidence="1">Isopropylmalate isomerase</fullName>
    </alternativeName>
</protein>
<name>LEUD_TERTT</name>
<evidence type="ECO:0000255" key="1">
    <source>
        <dbReference type="HAMAP-Rule" id="MF_01031"/>
    </source>
</evidence>
<dbReference type="EC" id="4.2.1.33" evidence="1"/>
<dbReference type="EMBL" id="CP001614">
    <property type="protein sequence ID" value="ACR11834.2"/>
    <property type="molecule type" value="Genomic_DNA"/>
</dbReference>
<dbReference type="RefSeq" id="WP_015817945.1">
    <property type="nucleotide sequence ID" value="NC_012997.1"/>
</dbReference>
<dbReference type="SMR" id="C5BL65"/>
<dbReference type="STRING" id="377629.TERTU_2501"/>
<dbReference type="KEGG" id="ttu:TERTU_2501"/>
<dbReference type="eggNOG" id="COG0066">
    <property type="taxonomic scope" value="Bacteria"/>
</dbReference>
<dbReference type="HOGENOM" id="CLU_081378_0_3_6"/>
<dbReference type="OrthoDB" id="9777465at2"/>
<dbReference type="UniPathway" id="UPA00048">
    <property type="reaction ID" value="UER00071"/>
</dbReference>
<dbReference type="Proteomes" id="UP000009080">
    <property type="component" value="Chromosome"/>
</dbReference>
<dbReference type="GO" id="GO:0009316">
    <property type="term" value="C:3-isopropylmalate dehydratase complex"/>
    <property type="evidence" value="ECO:0007669"/>
    <property type="project" value="InterPro"/>
</dbReference>
<dbReference type="GO" id="GO:0003861">
    <property type="term" value="F:3-isopropylmalate dehydratase activity"/>
    <property type="evidence" value="ECO:0007669"/>
    <property type="project" value="UniProtKB-UniRule"/>
</dbReference>
<dbReference type="GO" id="GO:0009098">
    <property type="term" value="P:L-leucine biosynthetic process"/>
    <property type="evidence" value="ECO:0007669"/>
    <property type="project" value="UniProtKB-UniRule"/>
</dbReference>
<dbReference type="CDD" id="cd01577">
    <property type="entry name" value="IPMI_Swivel"/>
    <property type="match status" value="1"/>
</dbReference>
<dbReference type="FunFam" id="3.20.19.10:FF:000003">
    <property type="entry name" value="3-isopropylmalate dehydratase small subunit"/>
    <property type="match status" value="1"/>
</dbReference>
<dbReference type="Gene3D" id="3.20.19.10">
    <property type="entry name" value="Aconitase, domain 4"/>
    <property type="match status" value="1"/>
</dbReference>
<dbReference type="HAMAP" id="MF_01031">
    <property type="entry name" value="LeuD_type1"/>
    <property type="match status" value="1"/>
</dbReference>
<dbReference type="InterPro" id="IPR004431">
    <property type="entry name" value="3-IsopropMal_deHydase_ssu"/>
</dbReference>
<dbReference type="InterPro" id="IPR015928">
    <property type="entry name" value="Aconitase/3IPM_dehydase_swvl"/>
</dbReference>
<dbReference type="InterPro" id="IPR000573">
    <property type="entry name" value="AconitaseA/IPMdHydase_ssu_swvl"/>
</dbReference>
<dbReference type="InterPro" id="IPR033940">
    <property type="entry name" value="IPMI_Swivel"/>
</dbReference>
<dbReference type="InterPro" id="IPR050075">
    <property type="entry name" value="LeuD"/>
</dbReference>
<dbReference type="NCBIfam" id="TIGR00171">
    <property type="entry name" value="leuD"/>
    <property type="match status" value="1"/>
</dbReference>
<dbReference type="NCBIfam" id="NF002458">
    <property type="entry name" value="PRK01641.1"/>
    <property type="match status" value="1"/>
</dbReference>
<dbReference type="PANTHER" id="PTHR43345:SF5">
    <property type="entry name" value="3-ISOPROPYLMALATE DEHYDRATASE SMALL SUBUNIT"/>
    <property type="match status" value="1"/>
</dbReference>
<dbReference type="PANTHER" id="PTHR43345">
    <property type="entry name" value="3-ISOPROPYLMALATE DEHYDRATASE SMALL SUBUNIT 2-RELATED-RELATED"/>
    <property type="match status" value="1"/>
</dbReference>
<dbReference type="Pfam" id="PF00694">
    <property type="entry name" value="Aconitase_C"/>
    <property type="match status" value="1"/>
</dbReference>
<dbReference type="SUPFAM" id="SSF52016">
    <property type="entry name" value="LeuD/IlvD-like"/>
    <property type="match status" value="1"/>
</dbReference>
<comment type="function">
    <text evidence="1">Catalyzes the isomerization between 2-isopropylmalate and 3-isopropylmalate, via the formation of 2-isopropylmaleate.</text>
</comment>
<comment type="catalytic activity">
    <reaction evidence="1">
        <text>(2R,3S)-3-isopropylmalate = (2S)-2-isopropylmalate</text>
        <dbReference type="Rhea" id="RHEA:32287"/>
        <dbReference type="ChEBI" id="CHEBI:1178"/>
        <dbReference type="ChEBI" id="CHEBI:35121"/>
        <dbReference type="EC" id="4.2.1.33"/>
    </reaction>
</comment>
<comment type="pathway">
    <text evidence="1">Amino-acid biosynthesis; L-leucine biosynthesis; L-leucine from 3-methyl-2-oxobutanoate: step 2/4.</text>
</comment>
<comment type="subunit">
    <text evidence="1">Heterodimer of LeuC and LeuD.</text>
</comment>
<comment type="similarity">
    <text evidence="1">Belongs to the LeuD family. LeuD type 1 subfamily.</text>
</comment>
<organism>
    <name type="scientific">Teredinibacter turnerae (strain ATCC 39867 / T7901)</name>
    <dbReference type="NCBI Taxonomy" id="377629"/>
    <lineage>
        <taxon>Bacteria</taxon>
        <taxon>Pseudomonadati</taxon>
        <taxon>Pseudomonadota</taxon>
        <taxon>Gammaproteobacteria</taxon>
        <taxon>Cellvibrionales</taxon>
        <taxon>Cellvibrionaceae</taxon>
        <taxon>Teredinibacter</taxon>
    </lineage>
</organism>
<proteinExistence type="inferred from homology"/>
<feature type="chain" id="PRO_1000213356" description="3-isopropylmalate dehydratase small subunit">
    <location>
        <begin position="1"/>
        <end position="215"/>
    </location>
</feature>